<sequence length="172" mass="20473">MKLQIFNTKLGLLAAKIYWKSWRHLGLSEDEIVSIALHAEHDSKKRYDPKYGLSFETYLKLNGANFIKSSYRSLMNKVDDWIGFKDMKTLEEQNTVSYTPENYLRSVEFREMVHLAFKKAKNEDERQVFALYVKGYKNLEIAKKLNLTTRRVRYLISIFKDHIKVLTKRYGY</sequence>
<feature type="chain" id="PRO_0000210609" description="Uncharacterized protein MG428 homolog">
    <location>
        <begin position="1"/>
        <end position="172"/>
    </location>
</feature>
<keyword id="KW-1185">Reference proteome</keyword>
<gene>
    <name type="ordered locus">MPN_626</name>
    <name type="ORF">C12_orf172</name>
    <name type="ORF">MP216</name>
</gene>
<dbReference type="EMBL" id="U00089">
    <property type="protein sequence ID" value="AAB95864.1"/>
    <property type="molecule type" value="Genomic_DNA"/>
</dbReference>
<dbReference type="PIR" id="S73542">
    <property type="entry name" value="S73542"/>
</dbReference>
<dbReference type="RefSeq" id="NP_110315.1">
    <property type="nucleotide sequence ID" value="NC_000912.1"/>
</dbReference>
<dbReference type="RefSeq" id="WP_010874983.1">
    <property type="nucleotide sequence ID" value="NC_000912.1"/>
</dbReference>
<dbReference type="SMR" id="P75169"/>
<dbReference type="STRING" id="272634.MPN_626"/>
<dbReference type="EnsemblBacteria" id="AAB95864">
    <property type="protein sequence ID" value="AAB95864"/>
    <property type="gene ID" value="MPN_626"/>
</dbReference>
<dbReference type="KEGG" id="mpn:MPN_626"/>
<dbReference type="PATRIC" id="fig|272634.6.peg.690"/>
<dbReference type="HOGENOM" id="CLU_1561219_0_0_14"/>
<dbReference type="OrthoDB" id="9909569at2"/>
<dbReference type="BioCyc" id="MPNE272634:G1GJ3-1006-MONOMER"/>
<dbReference type="Proteomes" id="UP000000808">
    <property type="component" value="Chromosome"/>
</dbReference>
<dbReference type="GO" id="GO:0003700">
    <property type="term" value="F:DNA-binding transcription factor activity"/>
    <property type="evidence" value="ECO:0007669"/>
    <property type="project" value="InterPro"/>
</dbReference>
<dbReference type="GO" id="GO:0006352">
    <property type="term" value="P:DNA-templated transcription initiation"/>
    <property type="evidence" value="ECO:0007669"/>
    <property type="project" value="InterPro"/>
</dbReference>
<dbReference type="Gene3D" id="1.10.10.10">
    <property type="entry name" value="Winged helix-like DNA-binding domain superfamily/Winged helix DNA-binding domain"/>
    <property type="match status" value="1"/>
</dbReference>
<dbReference type="InterPro" id="IPR014284">
    <property type="entry name" value="RNA_pol_sigma-70_dom"/>
</dbReference>
<dbReference type="InterPro" id="IPR013324">
    <property type="entry name" value="RNA_pol_sigma_r3/r4-like"/>
</dbReference>
<dbReference type="InterPro" id="IPR036388">
    <property type="entry name" value="WH-like_DNA-bd_sf"/>
</dbReference>
<dbReference type="NCBIfam" id="TIGR02937">
    <property type="entry name" value="sigma70-ECF"/>
    <property type="match status" value="1"/>
</dbReference>
<dbReference type="SUPFAM" id="SSF88659">
    <property type="entry name" value="Sigma3 and sigma4 domains of RNA polymerase sigma factors"/>
    <property type="match status" value="1"/>
</dbReference>
<organism>
    <name type="scientific">Mycoplasma pneumoniae (strain ATCC 29342 / M129 / Subtype 1)</name>
    <name type="common">Mycoplasmoides pneumoniae</name>
    <dbReference type="NCBI Taxonomy" id="272634"/>
    <lineage>
        <taxon>Bacteria</taxon>
        <taxon>Bacillati</taxon>
        <taxon>Mycoplasmatota</taxon>
        <taxon>Mycoplasmoidales</taxon>
        <taxon>Mycoplasmoidaceae</taxon>
        <taxon>Mycoplasmoides</taxon>
    </lineage>
</organism>
<proteinExistence type="predicted"/>
<reference key="1">
    <citation type="journal article" date="1996" name="Nucleic Acids Res.">
        <title>Complete sequence analysis of the genome of the bacterium Mycoplasma pneumoniae.</title>
        <authorList>
            <person name="Himmelreich R."/>
            <person name="Hilbert H."/>
            <person name="Plagens H."/>
            <person name="Pirkl E."/>
            <person name="Li B.-C."/>
            <person name="Herrmann R."/>
        </authorList>
    </citation>
    <scope>NUCLEOTIDE SEQUENCE [LARGE SCALE GENOMIC DNA]</scope>
    <source>
        <strain>ATCC 29342 / M129 / Subtype 1</strain>
    </source>
</reference>
<accession>P75169</accession>
<name>Y626_MYCPN</name>
<protein>
    <recommendedName>
        <fullName>Uncharacterized protein MG428 homolog</fullName>
    </recommendedName>
</protein>